<gene>
    <name evidence="1" type="primary">glgC</name>
    <name type="ordered locus">cauri_0998</name>
</gene>
<organism>
    <name type="scientific">Corynebacterium aurimucosum (strain ATCC 700975 / DSM 44827 / CIP 107346 / CN-1)</name>
    <name type="common">Corynebacterium nigricans</name>
    <dbReference type="NCBI Taxonomy" id="548476"/>
    <lineage>
        <taxon>Bacteria</taxon>
        <taxon>Bacillati</taxon>
        <taxon>Actinomycetota</taxon>
        <taxon>Actinomycetes</taxon>
        <taxon>Mycobacteriales</taxon>
        <taxon>Corynebacteriaceae</taxon>
        <taxon>Corynebacterium</taxon>
    </lineage>
</organism>
<proteinExistence type="inferred from homology"/>
<evidence type="ECO:0000255" key="1">
    <source>
        <dbReference type="HAMAP-Rule" id="MF_00624"/>
    </source>
</evidence>
<name>GLGC_CORA7</name>
<comment type="function">
    <text evidence="1">Involved in the biosynthesis of ADP-glucose, a building block required for the elongation reactions to produce glycogen. Catalyzes the reaction between ATP and alpha-D-glucose 1-phosphate (G1P) to produce pyrophosphate and ADP-Glc.</text>
</comment>
<comment type="catalytic activity">
    <reaction evidence="1">
        <text>alpha-D-glucose 1-phosphate + ATP + H(+) = ADP-alpha-D-glucose + diphosphate</text>
        <dbReference type="Rhea" id="RHEA:12120"/>
        <dbReference type="ChEBI" id="CHEBI:15378"/>
        <dbReference type="ChEBI" id="CHEBI:30616"/>
        <dbReference type="ChEBI" id="CHEBI:33019"/>
        <dbReference type="ChEBI" id="CHEBI:57498"/>
        <dbReference type="ChEBI" id="CHEBI:58601"/>
        <dbReference type="EC" id="2.7.7.27"/>
    </reaction>
</comment>
<comment type="pathway">
    <text evidence="1">Glycan biosynthesis; glycogen biosynthesis.</text>
</comment>
<comment type="subunit">
    <text evidence="1">Homotetramer.</text>
</comment>
<comment type="similarity">
    <text evidence="1">Belongs to the bacterial/plant glucose-1-phosphate adenylyltransferase family.</text>
</comment>
<accession>C3PFJ1</accession>
<feature type="chain" id="PRO_1000147222" description="Glucose-1-phosphate adenylyltransferase">
    <location>
        <begin position="1"/>
        <end position="405"/>
    </location>
</feature>
<feature type="binding site" evidence="1">
    <location>
        <position position="99"/>
    </location>
    <ligand>
        <name>alpha-D-glucose 1-phosphate</name>
        <dbReference type="ChEBI" id="CHEBI:58601"/>
    </ligand>
</feature>
<feature type="binding site" evidence="1">
    <location>
        <position position="164"/>
    </location>
    <ligand>
        <name>alpha-D-glucose 1-phosphate</name>
        <dbReference type="ChEBI" id="CHEBI:58601"/>
    </ligand>
</feature>
<feature type="binding site" evidence="1">
    <location>
        <begin position="179"/>
        <end position="180"/>
    </location>
    <ligand>
        <name>alpha-D-glucose 1-phosphate</name>
        <dbReference type="ChEBI" id="CHEBI:58601"/>
    </ligand>
</feature>
<feature type="binding site" evidence="1">
    <location>
        <position position="197"/>
    </location>
    <ligand>
        <name>alpha-D-glucose 1-phosphate</name>
        <dbReference type="ChEBI" id="CHEBI:58601"/>
    </ligand>
</feature>
<reference key="1">
    <citation type="journal article" date="2010" name="BMC Genomics">
        <title>Complete genome sequence and lifestyle of black-pigmented Corynebacterium aurimucosum ATCC 700975 (formerly C. nigricans CN-1) isolated from a vaginal swab of a woman with spontaneous abortion.</title>
        <authorList>
            <person name="Trost E."/>
            <person name="Gotker S."/>
            <person name="Schneider J."/>
            <person name="Schneiker-Bekel S."/>
            <person name="Szczepanowski R."/>
            <person name="Tilker A."/>
            <person name="Viehoever P."/>
            <person name="Arnold W."/>
            <person name="Bekel T."/>
            <person name="Blom J."/>
            <person name="Gartemann K.H."/>
            <person name="Linke B."/>
            <person name="Goesmann A."/>
            <person name="Puhler A."/>
            <person name="Shukla S.K."/>
            <person name="Tauch A."/>
        </authorList>
    </citation>
    <scope>NUCLEOTIDE SEQUENCE [LARGE SCALE GENOMIC DNA]</scope>
    <source>
        <strain>ATCC 700975 / DSM 44827 / CIP 107346 / CN-1</strain>
    </source>
</reference>
<protein>
    <recommendedName>
        <fullName evidence="1">Glucose-1-phosphate adenylyltransferase</fullName>
        <ecNumber evidence="1">2.7.7.27</ecNumber>
    </recommendedName>
    <alternativeName>
        <fullName evidence="1">ADP-glucose pyrophosphorylase</fullName>
        <shortName evidence="1">ADPGlc PPase</shortName>
    </alternativeName>
    <alternativeName>
        <fullName evidence="1">ADP-glucose synthase</fullName>
    </alternativeName>
</protein>
<dbReference type="EC" id="2.7.7.27" evidence="1"/>
<dbReference type="EMBL" id="CP001601">
    <property type="protein sequence ID" value="ACP32595.1"/>
    <property type="molecule type" value="Genomic_DNA"/>
</dbReference>
<dbReference type="RefSeq" id="WP_010187231.1">
    <property type="nucleotide sequence ID" value="NC_012590.1"/>
</dbReference>
<dbReference type="SMR" id="C3PFJ1"/>
<dbReference type="STRING" id="548476.cauri_0998"/>
<dbReference type="GeneID" id="31923623"/>
<dbReference type="KEGG" id="car:cauri_0998"/>
<dbReference type="eggNOG" id="COG0448">
    <property type="taxonomic scope" value="Bacteria"/>
</dbReference>
<dbReference type="HOGENOM" id="CLU_029499_14_1_11"/>
<dbReference type="OrthoDB" id="9801810at2"/>
<dbReference type="UniPathway" id="UPA00164"/>
<dbReference type="Proteomes" id="UP000002077">
    <property type="component" value="Chromosome"/>
</dbReference>
<dbReference type="GO" id="GO:0005524">
    <property type="term" value="F:ATP binding"/>
    <property type="evidence" value="ECO:0007669"/>
    <property type="project" value="UniProtKB-KW"/>
</dbReference>
<dbReference type="GO" id="GO:0008878">
    <property type="term" value="F:glucose-1-phosphate adenylyltransferase activity"/>
    <property type="evidence" value="ECO:0007669"/>
    <property type="project" value="UniProtKB-UniRule"/>
</dbReference>
<dbReference type="GO" id="GO:0005978">
    <property type="term" value="P:glycogen biosynthetic process"/>
    <property type="evidence" value="ECO:0007669"/>
    <property type="project" value="UniProtKB-UniRule"/>
</dbReference>
<dbReference type="CDD" id="cd02508">
    <property type="entry name" value="ADP_Glucose_PP"/>
    <property type="match status" value="1"/>
</dbReference>
<dbReference type="CDD" id="cd04651">
    <property type="entry name" value="LbH_G1P_AT_C"/>
    <property type="match status" value="1"/>
</dbReference>
<dbReference type="Gene3D" id="2.160.10.10">
    <property type="entry name" value="Hexapeptide repeat proteins"/>
    <property type="match status" value="1"/>
</dbReference>
<dbReference type="Gene3D" id="3.90.550.10">
    <property type="entry name" value="Spore Coat Polysaccharide Biosynthesis Protein SpsA, Chain A"/>
    <property type="match status" value="1"/>
</dbReference>
<dbReference type="HAMAP" id="MF_00624">
    <property type="entry name" value="GlgC"/>
    <property type="match status" value="1"/>
</dbReference>
<dbReference type="InterPro" id="IPR011831">
    <property type="entry name" value="ADP-Glc_PPase"/>
</dbReference>
<dbReference type="InterPro" id="IPR005836">
    <property type="entry name" value="ADP_Glu_pyroP_CS"/>
</dbReference>
<dbReference type="InterPro" id="IPR023049">
    <property type="entry name" value="GlgC_bac"/>
</dbReference>
<dbReference type="InterPro" id="IPR056818">
    <property type="entry name" value="GlmU/GlgC-like_hexapep"/>
</dbReference>
<dbReference type="InterPro" id="IPR005835">
    <property type="entry name" value="NTP_transferase_dom"/>
</dbReference>
<dbReference type="InterPro" id="IPR029044">
    <property type="entry name" value="Nucleotide-diphossugar_trans"/>
</dbReference>
<dbReference type="InterPro" id="IPR011004">
    <property type="entry name" value="Trimer_LpxA-like_sf"/>
</dbReference>
<dbReference type="NCBIfam" id="TIGR02091">
    <property type="entry name" value="glgC"/>
    <property type="match status" value="1"/>
</dbReference>
<dbReference type="NCBIfam" id="NF001947">
    <property type="entry name" value="PRK00725.1"/>
    <property type="match status" value="1"/>
</dbReference>
<dbReference type="NCBIfam" id="NF002023">
    <property type="entry name" value="PRK00844.1"/>
    <property type="match status" value="1"/>
</dbReference>
<dbReference type="PANTHER" id="PTHR43523:SF2">
    <property type="entry name" value="GLUCOSE-1-PHOSPHATE ADENYLYLTRANSFERASE"/>
    <property type="match status" value="1"/>
</dbReference>
<dbReference type="PANTHER" id="PTHR43523">
    <property type="entry name" value="GLUCOSE-1-PHOSPHATE ADENYLYLTRANSFERASE-RELATED"/>
    <property type="match status" value="1"/>
</dbReference>
<dbReference type="Pfam" id="PF24894">
    <property type="entry name" value="Hexapep_GlmU"/>
    <property type="match status" value="1"/>
</dbReference>
<dbReference type="Pfam" id="PF00483">
    <property type="entry name" value="NTP_transferase"/>
    <property type="match status" value="1"/>
</dbReference>
<dbReference type="SUPFAM" id="SSF53448">
    <property type="entry name" value="Nucleotide-diphospho-sugar transferases"/>
    <property type="match status" value="1"/>
</dbReference>
<dbReference type="SUPFAM" id="SSF51161">
    <property type="entry name" value="Trimeric LpxA-like enzymes"/>
    <property type="match status" value="1"/>
</dbReference>
<dbReference type="PROSITE" id="PS00808">
    <property type="entry name" value="ADP_GLC_PYROPHOSPH_1"/>
    <property type="match status" value="1"/>
</dbReference>
<dbReference type="PROSITE" id="PS00809">
    <property type="entry name" value="ADP_GLC_PYROPHOSPH_2"/>
    <property type="match status" value="1"/>
</dbReference>
<dbReference type="PROSITE" id="PS00810">
    <property type="entry name" value="ADP_GLC_PYROPHOSPH_3"/>
    <property type="match status" value="1"/>
</dbReference>
<sequence>MRSLPNVLAIVLAGGEGKRLFPLTEDRAKPAVPFGGSYRLIDFVLSNLVNAGFLKIAVLTQYKSHSLDRHISQAWNLSGPTPQYIASVPAQQRRGKRWYNGSADAILQSLNLIYDEKPDYVIVFGADHVYRMDPAQMVEEHIATGLDCSVAGIRVPRSEASAFGCIQADGMGTITEFVEKPENPPATPDDPNMTYASMGNYVFTTQALIDALLEDEKNEDSAHDMGGNIIPYFVEREQAHVYDFMANEVPGSTERDHGYWRDVGTIDSFYEAHMDMISVHPIFNLYNRSWPIHSTDDSNFPPAKFVQNGIAQSSMVAPGCIVSGGTVRNSVLASDVHVADGATVEGSVILPGVRIGRGAVVRHAILDKNVVVSDGAIIGVDRERDEERFKVSEGGVVVVGKNVKV</sequence>
<keyword id="KW-0067">ATP-binding</keyword>
<keyword id="KW-0119">Carbohydrate metabolism</keyword>
<keyword id="KW-0320">Glycogen biosynthesis</keyword>
<keyword id="KW-0321">Glycogen metabolism</keyword>
<keyword id="KW-0547">Nucleotide-binding</keyword>
<keyword id="KW-0548">Nucleotidyltransferase</keyword>
<keyword id="KW-1185">Reference proteome</keyword>
<keyword id="KW-0808">Transferase</keyword>